<comment type="function">
    <text evidence="1">Involved in the biosynthesis of the thiazole moiety of thiamine. Catalyzes the conversion of NAD and glycine to adenosine diphosphate 5-(2-hydroxyethyl)-4-methylthiazole-2-carboxylate (ADT), an adenylated thiazole intermediate, using free sulfide as a source of sulfur.</text>
</comment>
<comment type="catalytic activity">
    <reaction evidence="1">
        <text>hydrogen sulfide + glycine + NAD(+) = ADP-5-ethyl-4-methylthiazole-2-carboxylate + nicotinamide + 3 H2O + H(+)</text>
        <dbReference type="Rhea" id="RHEA:55704"/>
        <dbReference type="ChEBI" id="CHEBI:15377"/>
        <dbReference type="ChEBI" id="CHEBI:15378"/>
        <dbReference type="ChEBI" id="CHEBI:17154"/>
        <dbReference type="ChEBI" id="CHEBI:29919"/>
        <dbReference type="ChEBI" id="CHEBI:57305"/>
        <dbReference type="ChEBI" id="CHEBI:57540"/>
        <dbReference type="ChEBI" id="CHEBI:139151"/>
        <dbReference type="EC" id="2.4.2.59"/>
    </reaction>
</comment>
<comment type="cofactor">
    <cofactor evidence="1">
        <name>Fe(2+)</name>
        <dbReference type="ChEBI" id="CHEBI:29033"/>
    </cofactor>
</comment>
<comment type="pathway">
    <text evidence="1">Cofactor biosynthesis; thiamine diphosphate biosynthesis.</text>
</comment>
<comment type="subunit">
    <text evidence="1">Homooctamer; tetramer of dimers.</text>
</comment>
<comment type="similarity">
    <text evidence="1">Belongs to the THI4 family.</text>
</comment>
<proteinExistence type="inferred from homology"/>
<gene>
    <name evidence="1" type="primary">thi4</name>
    <name type="ordered locus">DMR_31420</name>
</gene>
<protein>
    <recommendedName>
        <fullName evidence="1">Thiamine thiazole synthase</fullName>
        <ecNumber evidence="1">2.4.2.59</ecNumber>
    </recommendedName>
</protein>
<sequence>MSLDERIITQAILETYFEKFKSSLDLDVAIVGGGPSGMTAARLLAADGFNVALFERKLSLGGGMWGGGMTFNMIVVQEESVHLLTDVGVPVKRYKDNYFTADAVAATTTLASAACLAGAKIFNCMSVEDVMLREENGVKRVTGIVINSSPVEIAGLHVDPVVLGSKYLVEATGHAVEVLQTLVRKNDVRLNTPSGGIEGEQSMWADTAEINTVKNTREIFPGLYVAGMAANASYGSYRMGPIFGGMLLSGEKVAADIAAKLKG</sequence>
<evidence type="ECO:0000255" key="1">
    <source>
        <dbReference type="HAMAP-Rule" id="MF_00304"/>
    </source>
</evidence>
<dbReference type="EC" id="2.4.2.59" evidence="1"/>
<dbReference type="EMBL" id="AP010904">
    <property type="protein sequence ID" value="BAH76633.1"/>
    <property type="molecule type" value="Genomic_DNA"/>
</dbReference>
<dbReference type="RefSeq" id="WP_015861787.1">
    <property type="nucleotide sequence ID" value="NC_012796.1"/>
</dbReference>
<dbReference type="SMR" id="C4XIR5"/>
<dbReference type="STRING" id="573370.DMR_31420"/>
<dbReference type="KEGG" id="dma:DMR_31420"/>
<dbReference type="eggNOG" id="COG1635">
    <property type="taxonomic scope" value="Bacteria"/>
</dbReference>
<dbReference type="HOGENOM" id="CLU_053727_2_0_7"/>
<dbReference type="OrthoDB" id="9777740at2"/>
<dbReference type="UniPathway" id="UPA00060"/>
<dbReference type="Proteomes" id="UP000009071">
    <property type="component" value="Chromosome"/>
</dbReference>
<dbReference type="GO" id="GO:0005506">
    <property type="term" value="F:iron ion binding"/>
    <property type="evidence" value="ECO:0007669"/>
    <property type="project" value="UniProtKB-UniRule"/>
</dbReference>
<dbReference type="GO" id="GO:0016763">
    <property type="term" value="F:pentosyltransferase activity"/>
    <property type="evidence" value="ECO:0007669"/>
    <property type="project" value="UniProtKB-UniRule"/>
</dbReference>
<dbReference type="GO" id="GO:0009228">
    <property type="term" value="P:thiamine biosynthetic process"/>
    <property type="evidence" value="ECO:0007669"/>
    <property type="project" value="UniProtKB-KW"/>
</dbReference>
<dbReference type="GO" id="GO:0009229">
    <property type="term" value="P:thiamine diphosphate biosynthetic process"/>
    <property type="evidence" value="ECO:0007669"/>
    <property type="project" value="UniProtKB-UniRule"/>
</dbReference>
<dbReference type="GO" id="GO:0052837">
    <property type="term" value="P:thiazole biosynthetic process"/>
    <property type="evidence" value="ECO:0007669"/>
    <property type="project" value="UniProtKB-UniRule"/>
</dbReference>
<dbReference type="Gene3D" id="3.50.50.60">
    <property type="entry name" value="FAD/NAD(P)-binding domain"/>
    <property type="match status" value="1"/>
</dbReference>
<dbReference type="HAMAP" id="MF_00304">
    <property type="entry name" value="Thi4"/>
    <property type="match status" value="1"/>
</dbReference>
<dbReference type="InterPro" id="IPR036188">
    <property type="entry name" value="FAD/NAD-bd_sf"/>
</dbReference>
<dbReference type="InterPro" id="IPR002922">
    <property type="entry name" value="Thi4_fam"/>
</dbReference>
<dbReference type="InterPro" id="IPR022828">
    <property type="entry name" value="Thi4_prok"/>
</dbReference>
<dbReference type="NCBIfam" id="TIGR00292">
    <property type="entry name" value="sulfide-dependent adenosine diphosphate thiazole synthase"/>
    <property type="match status" value="1"/>
</dbReference>
<dbReference type="PANTHER" id="PTHR43422">
    <property type="entry name" value="THIAMINE THIAZOLE SYNTHASE"/>
    <property type="match status" value="1"/>
</dbReference>
<dbReference type="PANTHER" id="PTHR43422:SF3">
    <property type="entry name" value="THIAMINE THIAZOLE SYNTHASE"/>
    <property type="match status" value="1"/>
</dbReference>
<dbReference type="Pfam" id="PF01946">
    <property type="entry name" value="Thi4"/>
    <property type="match status" value="1"/>
</dbReference>
<dbReference type="PRINTS" id="PR00420">
    <property type="entry name" value="RNGMNOXGNASE"/>
</dbReference>
<dbReference type="SUPFAM" id="SSF51905">
    <property type="entry name" value="FAD/NAD(P)-binding domain"/>
    <property type="match status" value="1"/>
</dbReference>
<name>THI4_SOLM1</name>
<organism>
    <name type="scientific">Solidesulfovibrio magneticus (strain ATCC 700980 / DSM 13731 / RS-1)</name>
    <name type="common">Desulfovibrio magneticus</name>
    <dbReference type="NCBI Taxonomy" id="573370"/>
    <lineage>
        <taxon>Bacteria</taxon>
        <taxon>Pseudomonadati</taxon>
        <taxon>Thermodesulfobacteriota</taxon>
        <taxon>Desulfovibrionia</taxon>
        <taxon>Desulfovibrionales</taxon>
        <taxon>Desulfovibrionaceae</taxon>
        <taxon>Solidesulfovibrio</taxon>
    </lineage>
</organism>
<accession>C4XIR5</accession>
<keyword id="KW-0408">Iron</keyword>
<keyword id="KW-0479">Metal-binding</keyword>
<keyword id="KW-0520">NAD</keyword>
<keyword id="KW-0784">Thiamine biosynthesis</keyword>
<keyword id="KW-0808">Transferase</keyword>
<feature type="chain" id="PRO_1000205004" description="Thiamine thiazole synthase">
    <location>
        <begin position="1"/>
        <end position="263"/>
    </location>
</feature>
<feature type="binding site" description="in other chain" evidence="1">
    <location>
        <position position="36"/>
    </location>
    <ligand>
        <name>NAD(+)</name>
        <dbReference type="ChEBI" id="CHEBI:57540"/>
        <note>ligand shared between two adjacent protomers</note>
    </ligand>
</feature>
<feature type="binding site" description="in other chain" evidence="1">
    <location>
        <begin position="55"/>
        <end position="56"/>
    </location>
    <ligand>
        <name>NAD(+)</name>
        <dbReference type="ChEBI" id="CHEBI:57540"/>
        <note>ligand shared between two adjacent protomers</note>
    </ligand>
</feature>
<feature type="binding site" description="in other chain" evidence="1">
    <location>
        <position position="63"/>
    </location>
    <ligand>
        <name>NAD(+)</name>
        <dbReference type="ChEBI" id="CHEBI:57540"/>
        <note>ligand shared between two adjacent protomers</note>
    </ligand>
</feature>
<feature type="binding site" description="in other chain" evidence="1">
    <location>
        <position position="127"/>
    </location>
    <ligand>
        <name>NAD(+)</name>
        <dbReference type="ChEBI" id="CHEBI:57540"/>
        <note>ligand shared between two adjacent protomers</note>
    </ligand>
</feature>
<feature type="binding site" evidence="1">
    <location>
        <begin position="157"/>
        <end position="159"/>
    </location>
    <ligand>
        <name>NAD(+)</name>
        <dbReference type="ChEBI" id="CHEBI:57540"/>
        <note>ligand shared between two adjacent protomers</note>
    </ligand>
</feature>
<feature type="binding site" evidence="1">
    <location>
        <position position="159"/>
    </location>
    <ligand>
        <name>Fe cation</name>
        <dbReference type="ChEBI" id="CHEBI:24875"/>
        <note>ligand shared between two adjacent protomers</note>
    </ligand>
</feature>
<feature type="binding site" description="in other chain" evidence="1">
    <location>
        <position position="174"/>
    </location>
    <ligand>
        <name>Fe cation</name>
        <dbReference type="ChEBI" id="CHEBI:24875"/>
        <note>ligand shared between two adjacent protomers</note>
    </ligand>
</feature>
<feature type="binding site" description="in other chain" evidence="1">
    <location>
        <position position="228"/>
    </location>
    <ligand>
        <name>NAD(+)</name>
        <dbReference type="ChEBI" id="CHEBI:57540"/>
        <note>ligand shared between two adjacent protomers</note>
    </ligand>
</feature>
<feature type="binding site" evidence="1">
    <location>
        <position position="238"/>
    </location>
    <ligand>
        <name>glycine</name>
        <dbReference type="ChEBI" id="CHEBI:57305"/>
    </ligand>
</feature>
<reference key="1">
    <citation type="journal article" date="2009" name="Genome Res.">
        <title>Whole genome sequence of Desulfovibrio magneticus strain RS-1 revealed common gene clusters in magnetotactic bacteria.</title>
        <authorList>
            <person name="Nakazawa H."/>
            <person name="Arakaki A."/>
            <person name="Narita-Yamada S."/>
            <person name="Yashiro I."/>
            <person name="Jinno K."/>
            <person name="Aoki N."/>
            <person name="Tsuruyama A."/>
            <person name="Okamura Y."/>
            <person name="Tanikawa S."/>
            <person name="Fujita N."/>
            <person name="Takeyama H."/>
            <person name="Matsunaga T."/>
        </authorList>
    </citation>
    <scope>NUCLEOTIDE SEQUENCE [LARGE SCALE GENOMIC DNA]</scope>
    <source>
        <strain>ATCC 700980 / DSM 13731 / RS-1</strain>
    </source>
</reference>